<evidence type="ECO:0000255" key="1">
    <source>
        <dbReference type="HAMAP-Rule" id="MF_00125"/>
    </source>
</evidence>
<comment type="function">
    <text evidence="1">Required for the first step of histidine biosynthesis. May allow the feedback regulation of ATP phosphoribosyltransferase activity by histidine.</text>
</comment>
<comment type="pathway">
    <text evidence="1">Amino-acid biosynthesis; L-histidine biosynthesis; L-histidine from 5-phospho-alpha-D-ribose 1-diphosphate: step 1/9.</text>
</comment>
<comment type="subunit">
    <text evidence="1">Heteromultimer composed of HisG and HisZ subunits.</text>
</comment>
<comment type="subcellular location">
    <subcellularLocation>
        <location evidence="1">Cytoplasm</location>
    </subcellularLocation>
</comment>
<comment type="miscellaneous">
    <text>This function is generally fulfilled by the C-terminal part of HisG, which is missing in some bacteria such as this one.</text>
</comment>
<comment type="similarity">
    <text evidence="1">Belongs to the class-II aminoacyl-tRNA synthetase family. HisZ subfamily.</text>
</comment>
<organism>
    <name type="scientific">Rippkaea orientalis (strain PCC 8801 / RF-1)</name>
    <name type="common">Cyanothece sp. (strain PCC 8801)</name>
    <dbReference type="NCBI Taxonomy" id="41431"/>
    <lineage>
        <taxon>Bacteria</taxon>
        <taxon>Bacillati</taxon>
        <taxon>Cyanobacteriota</taxon>
        <taxon>Cyanophyceae</taxon>
        <taxon>Oscillatoriophycideae</taxon>
        <taxon>Chroococcales</taxon>
        <taxon>Aphanothecaceae</taxon>
        <taxon>Rippkaea</taxon>
        <taxon>Rippkaea orientalis</taxon>
    </lineage>
</organism>
<dbReference type="EMBL" id="CP001287">
    <property type="protein sequence ID" value="ACK65416.1"/>
    <property type="molecule type" value="Genomic_DNA"/>
</dbReference>
<dbReference type="RefSeq" id="WP_012594690.1">
    <property type="nucleotide sequence ID" value="NC_011726.1"/>
</dbReference>
<dbReference type="SMR" id="B7K4F1"/>
<dbReference type="STRING" id="41431.PCC8801_1354"/>
<dbReference type="KEGG" id="cyp:PCC8801_1354"/>
<dbReference type="eggNOG" id="COG3705">
    <property type="taxonomic scope" value="Bacteria"/>
</dbReference>
<dbReference type="HOGENOM" id="CLU_025113_0_2_3"/>
<dbReference type="OrthoDB" id="9800814at2"/>
<dbReference type="UniPathway" id="UPA00031">
    <property type="reaction ID" value="UER00006"/>
</dbReference>
<dbReference type="Proteomes" id="UP000008204">
    <property type="component" value="Chromosome"/>
</dbReference>
<dbReference type="GO" id="GO:0005737">
    <property type="term" value="C:cytoplasm"/>
    <property type="evidence" value="ECO:0007669"/>
    <property type="project" value="UniProtKB-SubCell"/>
</dbReference>
<dbReference type="GO" id="GO:0004821">
    <property type="term" value="F:histidine-tRNA ligase activity"/>
    <property type="evidence" value="ECO:0007669"/>
    <property type="project" value="TreeGrafter"/>
</dbReference>
<dbReference type="GO" id="GO:0006427">
    <property type="term" value="P:histidyl-tRNA aminoacylation"/>
    <property type="evidence" value="ECO:0007669"/>
    <property type="project" value="TreeGrafter"/>
</dbReference>
<dbReference type="GO" id="GO:0000105">
    <property type="term" value="P:L-histidine biosynthetic process"/>
    <property type="evidence" value="ECO:0007669"/>
    <property type="project" value="UniProtKB-UniRule"/>
</dbReference>
<dbReference type="CDD" id="cd00773">
    <property type="entry name" value="HisRS-like_core"/>
    <property type="match status" value="1"/>
</dbReference>
<dbReference type="Gene3D" id="3.30.930.10">
    <property type="entry name" value="Bira Bifunctional Protein, Domain 2"/>
    <property type="match status" value="1"/>
</dbReference>
<dbReference type="HAMAP" id="MF_00125">
    <property type="entry name" value="HisZ"/>
    <property type="match status" value="1"/>
</dbReference>
<dbReference type="InterPro" id="IPR045864">
    <property type="entry name" value="aa-tRNA-synth_II/BPL/LPL"/>
</dbReference>
<dbReference type="InterPro" id="IPR041715">
    <property type="entry name" value="HisRS-like_core"/>
</dbReference>
<dbReference type="InterPro" id="IPR004516">
    <property type="entry name" value="HisRS/HisZ"/>
</dbReference>
<dbReference type="InterPro" id="IPR004517">
    <property type="entry name" value="HisZ"/>
</dbReference>
<dbReference type="NCBIfam" id="TIGR00443">
    <property type="entry name" value="hisZ_biosyn_reg"/>
    <property type="match status" value="1"/>
</dbReference>
<dbReference type="NCBIfam" id="NF008940">
    <property type="entry name" value="PRK12292.2-3"/>
    <property type="match status" value="1"/>
</dbReference>
<dbReference type="PANTHER" id="PTHR43707:SF1">
    <property type="entry name" value="HISTIDINE--TRNA LIGASE, MITOCHONDRIAL-RELATED"/>
    <property type="match status" value="1"/>
</dbReference>
<dbReference type="PANTHER" id="PTHR43707">
    <property type="entry name" value="HISTIDYL-TRNA SYNTHETASE"/>
    <property type="match status" value="1"/>
</dbReference>
<dbReference type="Pfam" id="PF13393">
    <property type="entry name" value="tRNA-synt_His"/>
    <property type="match status" value="1"/>
</dbReference>
<dbReference type="PIRSF" id="PIRSF001549">
    <property type="entry name" value="His-tRNA_synth"/>
    <property type="match status" value="1"/>
</dbReference>
<dbReference type="SUPFAM" id="SSF55681">
    <property type="entry name" value="Class II aaRS and biotin synthetases"/>
    <property type="match status" value="1"/>
</dbReference>
<feature type="chain" id="PRO_1000117675" description="ATP phosphoribosyltransferase regulatory subunit">
    <location>
        <begin position="1"/>
        <end position="407"/>
    </location>
</feature>
<gene>
    <name evidence="1" type="primary">hisZ</name>
    <name type="ordered locus">PCC8801_1354</name>
</gene>
<proteinExistence type="inferred from homology"/>
<keyword id="KW-0028">Amino-acid biosynthesis</keyword>
<keyword id="KW-0963">Cytoplasm</keyword>
<keyword id="KW-0368">Histidine biosynthesis</keyword>
<keyword id="KW-1185">Reference proteome</keyword>
<accession>B7K4F1</accession>
<sequence>MIHQPPAGARDLLPLEVVQKAWINDRLQQVFGGWGYQRIVTSTIEWLETLMAGGAIQHSTVIQLQDNSAGQLGLRPELTASIARAAVTRMADTTYPQRLCYRANVFRNPPSGHHGKQLEFYQAGVELLFAGGILADAEILLLVADCLEQLGIPQWQLLIGEAGVTRSLLSPFPDPLKSQVCHCLAQLDYVTLENLDYPSSHLKERAQLLFDLRGNATEVLEKVAKLELDKAGEESINNLKSLMRLINDSRSKPLPLTLDLSVIQTFDYYTGIVFKAVGKTDNQLHILGQGGRYDQLLGVYHPKGQSAPGIGFSFNVEDLYACLLNTSILPQLAPSIDWLIIPQTDEARSTAFQYAQNLRDSGKNLRVAIDLGGRSEAEIREYVQQNRVQQLAWIPEKGEPIIEVIFS</sequence>
<protein>
    <recommendedName>
        <fullName evidence="1">ATP phosphoribosyltransferase regulatory subunit</fullName>
    </recommendedName>
</protein>
<reference key="1">
    <citation type="journal article" date="2011" name="MBio">
        <title>Novel metabolic attributes of the genus Cyanothece, comprising a group of unicellular nitrogen-fixing Cyanobacteria.</title>
        <authorList>
            <person name="Bandyopadhyay A."/>
            <person name="Elvitigala T."/>
            <person name="Welsh E."/>
            <person name="Stockel J."/>
            <person name="Liberton M."/>
            <person name="Min H."/>
            <person name="Sherman L.A."/>
            <person name="Pakrasi H.B."/>
        </authorList>
    </citation>
    <scope>NUCLEOTIDE SEQUENCE [LARGE SCALE GENOMIC DNA]</scope>
    <source>
        <strain>PCC 8801 / RF-1</strain>
    </source>
</reference>
<name>HISZ_RIPO1</name>